<name>UBIG_SHIB3</name>
<comment type="function">
    <text evidence="1">O-methyltransferase that catalyzes the 2 O-methylation steps in the ubiquinone biosynthetic pathway.</text>
</comment>
<comment type="catalytic activity">
    <reaction evidence="1">
        <text>a 3-demethylubiquinol + S-adenosyl-L-methionine = a ubiquinol + S-adenosyl-L-homocysteine + H(+)</text>
        <dbReference type="Rhea" id="RHEA:44380"/>
        <dbReference type="Rhea" id="RHEA-COMP:9566"/>
        <dbReference type="Rhea" id="RHEA-COMP:10914"/>
        <dbReference type="ChEBI" id="CHEBI:15378"/>
        <dbReference type="ChEBI" id="CHEBI:17976"/>
        <dbReference type="ChEBI" id="CHEBI:57856"/>
        <dbReference type="ChEBI" id="CHEBI:59789"/>
        <dbReference type="ChEBI" id="CHEBI:84422"/>
        <dbReference type="EC" id="2.1.1.64"/>
    </reaction>
</comment>
<comment type="catalytic activity">
    <reaction evidence="1">
        <text>a 3-(all-trans-polyprenyl)benzene-1,2-diol + S-adenosyl-L-methionine = a 2-methoxy-6-(all-trans-polyprenyl)phenol + S-adenosyl-L-homocysteine + H(+)</text>
        <dbReference type="Rhea" id="RHEA:31411"/>
        <dbReference type="Rhea" id="RHEA-COMP:9550"/>
        <dbReference type="Rhea" id="RHEA-COMP:9551"/>
        <dbReference type="ChEBI" id="CHEBI:15378"/>
        <dbReference type="ChEBI" id="CHEBI:57856"/>
        <dbReference type="ChEBI" id="CHEBI:59789"/>
        <dbReference type="ChEBI" id="CHEBI:62729"/>
        <dbReference type="ChEBI" id="CHEBI:62731"/>
        <dbReference type="EC" id="2.1.1.222"/>
    </reaction>
</comment>
<comment type="pathway">
    <text evidence="1">Cofactor biosynthesis; ubiquinone biosynthesis.</text>
</comment>
<comment type="similarity">
    <text evidence="1">Belongs to the methyltransferase superfamily. UbiG/COQ3 family.</text>
</comment>
<reference key="1">
    <citation type="submission" date="2008-05" db="EMBL/GenBank/DDBJ databases">
        <title>Complete sequence of Shigella boydii serotype 18 strain BS512.</title>
        <authorList>
            <person name="Rasko D.A."/>
            <person name="Rosovitz M."/>
            <person name="Maurelli A.T."/>
            <person name="Myers G."/>
            <person name="Seshadri R."/>
            <person name="Cer R."/>
            <person name="Jiang L."/>
            <person name="Ravel J."/>
            <person name="Sebastian Y."/>
        </authorList>
    </citation>
    <scope>NUCLEOTIDE SEQUENCE [LARGE SCALE GENOMIC DNA]</scope>
    <source>
        <strain>CDC 3083-94 / BS512</strain>
    </source>
</reference>
<dbReference type="EC" id="2.1.1.222" evidence="1"/>
<dbReference type="EC" id="2.1.1.64" evidence="1"/>
<dbReference type="EMBL" id="CP001063">
    <property type="protein sequence ID" value="ACD07010.1"/>
    <property type="molecule type" value="Genomic_DNA"/>
</dbReference>
<dbReference type="RefSeq" id="WP_000990754.1">
    <property type="nucleotide sequence ID" value="NC_010658.1"/>
</dbReference>
<dbReference type="SMR" id="B2TW20"/>
<dbReference type="STRING" id="344609.SbBS512_E2607"/>
<dbReference type="KEGG" id="sbc:SbBS512_E2607"/>
<dbReference type="HOGENOM" id="CLU_042432_5_0_6"/>
<dbReference type="UniPathway" id="UPA00232"/>
<dbReference type="Proteomes" id="UP000001030">
    <property type="component" value="Chromosome"/>
</dbReference>
<dbReference type="GO" id="GO:0102208">
    <property type="term" value="F:2-polyprenyl-6-hydroxyphenol methylase activity"/>
    <property type="evidence" value="ECO:0007669"/>
    <property type="project" value="UniProtKB-EC"/>
</dbReference>
<dbReference type="GO" id="GO:0061542">
    <property type="term" value="F:3-demethylubiquinol 3-O-methyltransferase activity"/>
    <property type="evidence" value="ECO:0007669"/>
    <property type="project" value="UniProtKB-UniRule"/>
</dbReference>
<dbReference type="GO" id="GO:0010420">
    <property type="term" value="F:polyprenyldihydroxybenzoate methyltransferase activity"/>
    <property type="evidence" value="ECO:0007669"/>
    <property type="project" value="InterPro"/>
</dbReference>
<dbReference type="GO" id="GO:0032259">
    <property type="term" value="P:methylation"/>
    <property type="evidence" value="ECO:0007669"/>
    <property type="project" value="UniProtKB-KW"/>
</dbReference>
<dbReference type="CDD" id="cd02440">
    <property type="entry name" value="AdoMet_MTases"/>
    <property type="match status" value="1"/>
</dbReference>
<dbReference type="FunFam" id="3.40.50.150:FF:000028">
    <property type="entry name" value="Ubiquinone biosynthesis O-methyltransferase"/>
    <property type="match status" value="1"/>
</dbReference>
<dbReference type="Gene3D" id="3.40.50.150">
    <property type="entry name" value="Vaccinia Virus protein VP39"/>
    <property type="match status" value="1"/>
</dbReference>
<dbReference type="HAMAP" id="MF_00472">
    <property type="entry name" value="UbiG"/>
    <property type="match status" value="1"/>
</dbReference>
<dbReference type="InterPro" id="IPR029063">
    <property type="entry name" value="SAM-dependent_MTases_sf"/>
</dbReference>
<dbReference type="InterPro" id="IPR010233">
    <property type="entry name" value="UbiG_MeTrfase"/>
</dbReference>
<dbReference type="NCBIfam" id="TIGR01983">
    <property type="entry name" value="UbiG"/>
    <property type="match status" value="1"/>
</dbReference>
<dbReference type="PANTHER" id="PTHR43464">
    <property type="entry name" value="METHYLTRANSFERASE"/>
    <property type="match status" value="1"/>
</dbReference>
<dbReference type="PANTHER" id="PTHR43464:SF19">
    <property type="entry name" value="UBIQUINONE BIOSYNTHESIS O-METHYLTRANSFERASE, MITOCHONDRIAL"/>
    <property type="match status" value="1"/>
</dbReference>
<dbReference type="Pfam" id="PF13489">
    <property type="entry name" value="Methyltransf_23"/>
    <property type="match status" value="1"/>
</dbReference>
<dbReference type="SUPFAM" id="SSF53335">
    <property type="entry name" value="S-adenosyl-L-methionine-dependent methyltransferases"/>
    <property type="match status" value="1"/>
</dbReference>
<gene>
    <name evidence="1" type="primary">ubiG</name>
    <name type="ordered locus">SbBS512_E2607</name>
</gene>
<organism>
    <name type="scientific">Shigella boydii serotype 18 (strain CDC 3083-94 / BS512)</name>
    <dbReference type="NCBI Taxonomy" id="344609"/>
    <lineage>
        <taxon>Bacteria</taxon>
        <taxon>Pseudomonadati</taxon>
        <taxon>Pseudomonadota</taxon>
        <taxon>Gammaproteobacteria</taxon>
        <taxon>Enterobacterales</taxon>
        <taxon>Enterobacteriaceae</taxon>
        <taxon>Shigella</taxon>
    </lineage>
</organism>
<protein>
    <recommendedName>
        <fullName evidence="1">Ubiquinone biosynthesis O-methyltransferase</fullName>
    </recommendedName>
    <alternativeName>
        <fullName evidence="1">2-polyprenyl-6-hydroxyphenol methylase</fullName>
        <ecNumber evidence="1">2.1.1.222</ecNumber>
    </alternativeName>
    <alternativeName>
        <fullName evidence="1">3-demethylubiquinone 3-O-methyltransferase</fullName>
        <ecNumber evidence="1">2.1.1.64</ecNumber>
    </alternativeName>
</protein>
<proteinExistence type="inferred from homology"/>
<accession>B2TW20</accession>
<feature type="chain" id="PRO_1000199703" description="Ubiquinone biosynthesis O-methyltransferase">
    <location>
        <begin position="1"/>
        <end position="240"/>
    </location>
</feature>
<feature type="binding site" evidence="1">
    <location>
        <position position="44"/>
    </location>
    <ligand>
        <name>S-adenosyl-L-methionine</name>
        <dbReference type="ChEBI" id="CHEBI:59789"/>
    </ligand>
</feature>
<feature type="binding site" evidence="1">
    <location>
        <position position="64"/>
    </location>
    <ligand>
        <name>S-adenosyl-L-methionine</name>
        <dbReference type="ChEBI" id="CHEBI:59789"/>
    </ligand>
</feature>
<feature type="binding site" evidence="1">
    <location>
        <position position="85"/>
    </location>
    <ligand>
        <name>S-adenosyl-L-methionine</name>
        <dbReference type="ChEBI" id="CHEBI:59789"/>
    </ligand>
</feature>
<feature type="binding site" evidence="1">
    <location>
        <position position="129"/>
    </location>
    <ligand>
        <name>S-adenosyl-L-methionine</name>
        <dbReference type="ChEBI" id="CHEBI:59789"/>
    </ligand>
</feature>
<keyword id="KW-0489">Methyltransferase</keyword>
<keyword id="KW-1185">Reference proteome</keyword>
<keyword id="KW-0949">S-adenosyl-L-methionine</keyword>
<keyword id="KW-0808">Transferase</keyword>
<keyword id="KW-0831">Ubiquinone biosynthesis</keyword>
<evidence type="ECO:0000255" key="1">
    <source>
        <dbReference type="HAMAP-Rule" id="MF_00472"/>
    </source>
</evidence>
<sequence>MNAEKSPENHNVDHEEIAKFEAVASRWWDLEGEFKPLHRINPLRLGYIAERAGGLFGKKVLDVGCGGGILAESMAREGATVTGLDMGFEPLQVAKLHALESGIQVDYVQETVEEHAAKHAGQYDVVTCMEMLEHVPDPQSVVRACAQLVKPGGDVFFSTLNRNGKSWLMAVVGAEYILRMVPKGTHDVKKFIKPAELLGWVDQTSLKERHITGLHYNPLTNTFKLGPGVDVNYMLHTQNK</sequence>